<comment type="subunit">
    <text evidence="1">Component of the mitochondrial ribosome large subunit (39S) which comprises a 16S rRNA and about 50 distinct proteins.</text>
</comment>
<comment type="subcellular location">
    <subcellularLocation>
        <location evidence="1">Mitochondrion</location>
    </subcellularLocation>
</comment>
<comment type="similarity">
    <text evidence="3">Belongs to the universal ribosomal protein uL23 family.</text>
</comment>
<protein>
    <recommendedName>
        <fullName evidence="3">Large ribosomal subunit protein uL23m</fullName>
    </recommendedName>
    <alternativeName>
        <fullName>39S ribosomal protein L23, mitochondrial</fullName>
        <shortName>L23mt</shortName>
        <shortName>MRP-L23</shortName>
    </alternativeName>
    <alternativeName>
        <fullName>L23 mitochondrial-related protein</fullName>
    </alternativeName>
</protein>
<reference key="1">
    <citation type="journal article" date="1997" name="Genomics">
        <title>Structure and expression of the mouse L23mrp gene downstream of the imprinted H19 gene: biallelic expression and lack of interaction with the H19 enhancers.</title>
        <authorList>
            <person name="Zubair M."/>
            <person name="Hilton K."/>
            <person name="Saam J.R."/>
            <person name="Surani M.A."/>
            <person name="Tilghman S.M."/>
            <person name="Sasaki H."/>
        </authorList>
    </citation>
    <scope>NUCLEOTIDE SEQUENCE [GENOMIC DNA / MRNA]</scope>
    <source>
        <strain>129/SvJ</strain>
        <tissue>Liver</tissue>
    </source>
</reference>
<reference key="2">
    <citation type="journal article" date="2001" name="J. Biol. Chem.">
        <title>Structural compensation for the deficit of rRNA with proteins in the mammalian mitochondrial ribosome. Systematic analysis of protein components of the large ribosomal subunit from mammalian mitochondria.</title>
        <authorList>
            <person name="Suzuki T."/>
            <person name="Terasaki M."/>
            <person name="Takemoto-Hori C."/>
            <person name="Hanada T."/>
            <person name="Ueda T."/>
            <person name="Wada A."/>
            <person name="Watanabe K."/>
        </authorList>
    </citation>
    <scope>NUCLEOTIDE SEQUENCE [MRNA]</scope>
</reference>
<reference key="3">
    <citation type="journal article" date="2005" name="Science">
        <title>The transcriptional landscape of the mammalian genome.</title>
        <authorList>
            <person name="Carninci P."/>
            <person name="Kasukawa T."/>
            <person name="Katayama S."/>
            <person name="Gough J."/>
            <person name="Frith M.C."/>
            <person name="Maeda N."/>
            <person name="Oyama R."/>
            <person name="Ravasi T."/>
            <person name="Lenhard B."/>
            <person name="Wells C."/>
            <person name="Kodzius R."/>
            <person name="Shimokawa K."/>
            <person name="Bajic V.B."/>
            <person name="Brenner S.E."/>
            <person name="Batalov S."/>
            <person name="Forrest A.R."/>
            <person name="Zavolan M."/>
            <person name="Davis M.J."/>
            <person name="Wilming L.G."/>
            <person name="Aidinis V."/>
            <person name="Allen J.E."/>
            <person name="Ambesi-Impiombato A."/>
            <person name="Apweiler R."/>
            <person name="Aturaliya R.N."/>
            <person name="Bailey T.L."/>
            <person name="Bansal M."/>
            <person name="Baxter L."/>
            <person name="Beisel K.W."/>
            <person name="Bersano T."/>
            <person name="Bono H."/>
            <person name="Chalk A.M."/>
            <person name="Chiu K.P."/>
            <person name="Choudhary V."/>
            <person name="Christoffels A."/>
            <person name="Clutterbuck D.R."/>
            <person name="Crowe M.L."/>
            <person name="Dalla E."/>
            <person name="Dalrymple B.P."/>
            <person name="de Bono B."/>
            <person name="Della Gatta G."/>
            <person name="di Bernardo D."/>
            <person name="Down T."/>
            <person name="Engstrom P."/>
            <person name="Fagiolini M."/>
            <person name="Faulkner G."/>
            <person name="Fletcher C.F."/>
            <person name="Fukushima T."/>
            <person name="Furuno M."/>
            <person name="Futaki S."/>
            <person name="Gariboldi M."/>
            <person name="Georgii-Hemming P."/>
            <person name="Gingeras T.R."/>
            <person name="Gojobori T."/>
            <person name="Green R.E."/>
            <person name="Gustincich S."/>
            <person name="Harbers M."/>
            <person name="Hayashi Y."/>
            <person name="Hensch T.K."/>
            <person name="Hirokawa N."/>
            <person name="Hill D."/>
            <person name="Huminiecki L."/>
            <person name="Iacono M."/>
            <person name="Ikeo K."/>
            <person name="Iwama A."/>
            <person name="Ishikawa T."/>
            <person name="Jakt M."/>
            <person name="Kanapin A."/>
            <person name="Katoh M."/>
            <person name="Kawasawa Y."/>
            <person name="Kelso J."/>
            <person name="Kitamura H."/>
            <person name="Kitano H."/>
            <person name="Kollias G."/>
            <person name="Krishnan S.P."/>
            <person name="Kruger A."/>
            <person name="Kummerfeld S.K."/>
            <person name="Kurochkin I.V."/>
            <person name="Lareau L.F."/>
            <person name="Lazarevic D."/>
            <person name="Lipovich L."/>
            <person name="Liu J."/>
            <person name="Liuni S."/>
            <person name="McWilliam S."/>
            <person name="Madan Babu M."/>
            <person name="Madera M."/>
            <person name="Marchionni L."/>
            <person name="Matsuda H."/>
            <person name="Matsuzawa S."/>
            <person name="Miki H."/>
            <person name="Mignone F."/>
            <person name="Miyake S."/>
            <person name="Morris K."/>
            <person name="Mottagui-Tabar S."/>
            <person name="Mulder N."/>
            <person name="Nakano N."/>
            <person name="Nakauchi H."/>
            <person name="Ng P."/>
            <person name="Nilsson R."/>
            <person name="Nishiguchi S."/>
            <person name="Nishikawa S."/>
            <person name="Nori F."/>
            <person name="Ohara O."/>
            <person name="Okazaki Y."/>
            <person name="Orlando V."/>
            <person name="Pang K.C."/>
            <person name="Pavan W.J."/>
            <person name="Pavesi G."/>
            <person name="Pesole G."/>
            <person name="Petrovsky N."/>
            <person name="Piazza S."/>
            <person name="Reed J."/>
            <person name="Reid J.F."/>
            <person name="Ring B.Z."/>
            <person name="Ringwald M."/>
            <person name="Rost B."/>
            <person name="Ruan Y."/>
            <person name="Salzberg S.L."/>
            <person name="Sandelin A."/>
            <person name="Schneider C."/>
            <person name="Schoenbach C."/>
            <person name="Sekiguchi K."/>
            <person name="Semple C.A."/>
            <person name="Seno S."/>
            <person name="Sessa L."/>
            <person name="Sheng Y."/>
            <person name="Shibata Y."/>
            <person name="Shimada H."/>
            <person name="Shimada K."/>
            <person name="Silva D."/>
            <person name="Sinclair B."/>
            <person name="Sperling S."/>
            <person name="Stupka E."/>
            <person name="Sugiura K."/>
            <person name="Sultana R."/>
            <person name="Takenaka Y."/>
            <person name="Taki K."/>
            <person name="Tammoja K."/>
            <person name="Tan S.L."/>
            <person name="Tang S."/>
            <person name="Taylor M.S."/>
            <person name="Tegner J."/>
            <person name="Teichmann S.A."/>
            <person name="Ueda H.R."/>
            <person name="van Nimwegen E."/>
            <person name="Verardo R."/>
            <person name="Wei C.L."/>
            <person name="Yagi K."/>
            <person name="Yamanishi H."/>
            <person name="Zabarovsky E."/>
            <person name="Zhu S."/>
            <person name="Zimmer A."/>
            <person name="Hide W."/>
            <person name="Bult C."/>
            <person name="Grimmond S.M."/>
            <person name="Teasdale R.D."/>
            <person name="Liu E.T."/>
            <person name="Brusic V."/>
            <person name="Quackenbush J."/>
            <person name="Wahlestedt C."/>
            <person name="Mattick J.S."/>
            <person name="Hume D.A."/>
            <person name="Kai C."/>
            <person name="Sasaki D."/>
            <person name="Tomaru Y."/>
            <person name="Fukuda S."/>
            <person name="Kanamori-Katayama M."/>
            <person name="Suzuki M."/>
            <person name="Aoki J."/>
            <person name="Arakawa T."/>
            <person name="Iida J."/>
            <person name="Imamura K."/>
            <person name="Itoh M."/>
            <person name="Kato T."/>
            <person name="Kawaji H."/>
            <person name="Kawagashira N."/>
            <person name="Kawashima T."/>
            <person name="Kojima M."/>
            <person name="Kondo S."/>
            <person name="Konno H."/>
            <person name="Nakano K."/>
            <person name="Ninomiya N."/>
            <person name="Nishio T."/>
            <person name="Okada M."/>
            <person name="Plessy C."/>
            <person name="Shibata K."/>
            <person name="Shiraki T."/>
            <person name="Suzuki S."/>
            <person name="Tagami M."/>
            <person name="Waki K."/>
            <person name="Watahiki A."/>
            <person name="Okamura-Oho Y."/>
            <person name="Suzuki H."/>
            <person name="Kawai J."/>
            <person name="Hayashizaki Y."/>
        </authorList>
    </citation>
    <scope>NUCLEOTIDE SEQUENCE [LARGE SCALE MRNA]</scope>
    <source>
        <strain>C57BL/6J</strain>
        <tissue>Lung</tissue>
    </source>
</reference>
<reference key="4">
    <citation type="journal article" date="2004" name="Genome Res.">
        <title>The status, quality, and expansion of the NIH full-length cDNA project: the Mammalian Gene Collection (MGC).</title>
        <authorList>
            <consortium name="The MGC Project Team"/>
        </authorList>
    </citation>
    <scope>NUCLEOTIDE SEQUENCE [LARGE SCALE MRNA]</scope>
    <source>
        <strain>C57BL/6J</strain>
        <tissue>Brain</tissue>
    </source>
</reference>
<reference key="5">
    <citation type="journal article" date="1997" name="Mamm. Genome">
        <title>Matrix-attachment regions in the mouse chromosome 7F imprinted domain.</title>
        <authorList>
            <person name="Greally J.M."/>
            <person name="Guinness M.E."/>
            <person name="McGrath J."/>
            <person name="Zemel S."/>
        </authorList>
    </citation>
    <scope>NUCLEOTIDE SEQUENCE [GENOMIC DNA] OF 8-44</scope>
    <source>
        <strain>C57BL/6J</strain>
    </source>
</reference>
<reference key="6">
    <citation type="journal article" date="2010" name="Cell">
        <title>A tissue-specific atlas of mouse protein phosphorylation and expression.</title>
        <authorList>
            <person name="Huttlin E.L."/>
            <person name="Jedrychowski M.P."/>
            <person name="Elias J.E."/>
            <person name="Goswami T."/>
            <person name="Rad R."/>
            <person name="Beausoleil S.A."/>
            <person name="Villen J."/>
            <person name="Haas W."/>
            <person name="Sowa M.E."/>
            <person name="Gygi S.P."/>
        </authorList>
    </citation>
    <scope>IDENTIFICATION BY MASS SPECTROMETRY [LARGE SCALE ANALYSIS]</scope>
    <source>
        <tissue>Brain</tissue>
        <tissue>Brown adipose tissue</tissue>
        <tissue>Heart</tissue>
        <tissue>Kidney</tissue>
        <tissue>Liver</tissue>
        <tissue>Lung</tissue>
        <tissue>Pancreas</tissue>
        <tissue>Spleen</tissue>
        <tissue>Testis</tissue>
    </source>
</reference>
<keyword id="KW-0496">Mitochondrion</keyword>
<keyword id="KW-1185">Reference proteome</keyword>
<keyword id="KW-0687">Ribonucleoprotein</keyword>
<keyword id="KW-0689">Ribosomal protein</keyword>
<organism>
    <name type="scientific">Mus musculus</name>
    <name type="common">Mouse</name>
    <dbReference type="NCBI Taxonomy" id="10090"/>
    <lineage>
        <taxon>Eukaryota</taxon>
        <taxon>Metazoa</taxon>
        <taxon>Chordata</taxon>
        <taxon>Craniata</taxon>
        <taxon>Vertebrata</taxon>
        <taxon>Euteleostomi</taxon>
        <taxon>Mammalia</taxon>
        <taxon>Eutheria</taxon>
        <taxon>Euarchontoglires</taxon>
        <taxon>Glires</taxon>
        <taxon>Rodentia</taxon>
        <taxon>Myomorpha</taxon>
        <taxon>Muroidea</taxon>
        <taxon>Muridae</taxon>
        <taxon>Murinae</taxon>
        <taxon>Mus</taxon>
        <taxon>Mus</taxon>
    </lineage>
</organism>
<evidence type="ECO:0000250" key="1">
    <source>
        <dbReference type="UniProtKB" id="Q16540"/>
    </source>
</evidence>
<evidence type="ECO:0000256" key="2">
    <source>
        <dbReference type="SAM" id="MobiDB-lite"/>
    </source>
</evidence>
<evidence type="ECO:0000305" key="3"/>
<name>RM23_MOUSE</name>
<accession>O35972</accession>
<accession>Q78E46</accession>
<proteinExistence type="evidence at protein level"/>
<gene>
    <name type="primary">Mrpl23</name>
    <name type="synonym">L23mrp</name>
</gene>
<feature type="chain" id="PRO_0000129485" description="Large ribosomal subunit protein uL23m">
    <location>
        <begin position="1"/>
        <end position="146"/>
    </location>
</feature>
<feature type="region of interest" description="Disordered" evidence="2">
    <location>
        <begin position="108"/>
        <end position="138"/>
    </location>
</feature>
<feature type="compositionally biased region" description="Basic and acidic residues" evidence="2">
    <location>
        <begin position="111"/>
        <end position="120"/>
    </location>
</feature>
<dbReference type="EMBL" id="U84902">
    <property type="protein sequence ID" value="AAC53392.1"/>
    <property type="molecule type" value="mRNA"/>
</dbReference>
<dbReference type="EMBL" id="U84903">
    <property type="protein sequence ID" value="AAC53393.1"/>
    <property type="molecule type" value="Genomic_DNA"/>
</dbReference>
<dbReference type="EMBL" id="AB049646">
    <property type="protein sequence ID" value="BAB40851.1"/>
    <property type="molecule type" value="mRNA"/>
</dbReference>
<dbReference type="EMBL" id="AK086805">
    <property type="protein sequence ID" value="BAC39746.1"/>
    <property type="molecule type" value="mRNA"/>
</dbReference>
<dbReference type="EMBL" id="BC081460">
    <property type="protein sequence ID" value="AAH81460.1"/>
    <property type="molecule type" value="mRNA"/>
</dbReference>
<dbReference type="EMBL" id="U71209">
    <property type="protein sequence ID" value="AAB70459.1"/>
    <property type="molecule type" value="Genomic_DNA"/>
</dbReference>
<dbReference type="CCDS" id="CCDS22032.1"/>
<dbReference type="RefSeq" id="NP_035418.1">
    <property type="nucleotide sequence ID" value="NM_011288.3"/>
</dbReference>
<dbReference type="SMR" id="O35972"/>
<dbReference type="BioGRID" id="202972">
    <property type="interactions" value="3"/>
</dbReference>
<dbReference type="ComplexPortal" id="CPX-5302">
    <property type="entry name" value="39S mitochondrial large ribosomal subunit"/>
</dbReference>
<dbReference type="DIP" id="DIP-61654N"/>
<dbReference type="FunCoup" id="O35972">
    <property type="interactions" value="367"/>
</dbReference>
<dbReference type="IntAct" id="O35972">
    <property type="interactions" value="1"/>
</dbReference>
<dbReference type="STRING" id="10090.ENSMUSP00000039784"/>
<dbReference type="iPTMnet" id="O35972"/>
<dbReference type="PhosphoSitePlus" id="O35972"/>
<dbReference type="SwissPalm" id="O35972"/>
<dbReference type="jPOST" id="O35972"/>
<dbReference type="PaxDb" id="10090-ENSMUSP00000039784"/>
<dbReference type="PeptideAtlas" id="O35972"/>
<dbReference type="ProteomicsDB" id="300398"/>
<dbReference type="Pumba" id="O35972"/>
<dbReference type="DNASU" id="19935"/>
<dbReference type="Ensembl" id="ENSMUST00000038675.7">
    <property type="protein sequence ID" value="ENSMUSP00000039784.7"/>
    <property type="gene ID" value="ENSMUSG00000037772.14"/>
</dbReference>
<dbReference type="GeneID" id="19935"/>
<dbReference type="KEGG" id="mmu:19935"/>
<dbReference type="UCSC" id="uc009kny.1">
    <property type="organism name" value="mouse"/>
</dbReference>
<dbReference type="AGR" id="MGI:1196612"/>
<dbReference type="CTD" id="6150"/>
<dbReference type="MGI" id="MGI:1196612">
    <property type="gene designation" value="Mrpl23"/>
</dbReference>
<dbReference type="VEuPathDB" id="HostDB:ENSMUSG00000037772"/>
<dbReference type="eggNOG" id="KOG4089">
    <property type="taxonomic scope" value="Eukaryota"/>
</dbReference>
<dbReference type="GeneTree" id="ENSGT00390000007739"/>
<dbReference type="HOGENOM" id="CLU_103097_1_0_1"/>
<dbReference type="InParanoid" id="O35972"/>
<dbReference type="OMA" id="PNFWLKL"/>
<dbReference type="OrthoDB" id="275582at2759"/>
<dbReference type="PhylomeDB" id="O35972"/>
<dbReference type="TreeFam" id="TF105852"/>
<dbReference type="Reactome" id="R-MMU-5389840">
    <property type="pathway name" value="Mitochondrial translation elongation"/>
</dbReference>
<dbReference type="Reactome" id="R-MMU-5419276">
    <property type="pathway name" value="Mitochondrial translation termination"/>
</dbReference>
<dbReference type="BioGRID-ORCS" id="19935">
    <property type="hits" value="25 hits in 81 CRISPR screens"/>
</dbReference>
<dbReference type="ChiTaRS" id="Mrpl23">
    <property type="organism name" value="mouse"/>
</dbReference>
<dbReference type="PRO" id="PR:O35972"/>
<dbReference type="Proteomes" id="UP000000589">
    <property type="component" value="Chromosome 7"/>
</dbReference>
<dbReference type="RNAct" id="O35972">
    <property type="molecule type" value="protein"/>
</dbReference>
<dbReference type="Bgee" id="ENSMUSG00000037772">
    <property type="expression patterns" value="Expressed in yolk sac and 72 other cell types or tissues"/>
</dbReference>
<dbReference type="ExpressionAtlas" id="O35972">
    <property type="expression patterns" value="baseline and differential"/>
</dbReference>
<dbReference type="GO" id="GO:0022626">
    <property type="term" value="C:cytosolic ribosome"/>
    <property type="evidence" value="ECO:0007669"/>
    <property type="project" value="UniProtKB-ARBA"/>
</dbReference>
<dbReference type="GO" id="GO:0005743">
    <property type="term" value="C:mitochondrial inner membrane"/>
    <property type="evidence" value="ECO:0000303"/>
    <property type="project" value="ComplexPortal"/>
</dbReference>
<dbReference type="GO" id="GO:0005762">
    <property type="term" value="C:mitochondrial large ribosomal subunit"/>
    <property type="evidence" value="ECO:0000250"/>
    <property type="project" value="UniProtKB"/>
</dbReference>
<dbReference type="GO" id="GO:0005739">
    <property type="term" value="C:mitochondrion"/>
    <property type="evidence" value="ECO:0007005"/>
    <property type="project" value="MGI"/>
</dbReference>
<dbReference type="GO" id="GO:0003735">
    <property type="term" value="F:structural constituent of ribosome"/>
    <property type="evidence" value="ECO:0000266"/>
    <property type="project" value="MGI"/>
</dbReference>
<dbReference type="GO" id="GO:0032543">
    <property type="term" value="P:mitochondrial translation"/>
    <property type="evidence" value="ECO:0000303"/>
    <property type="project" value="ComplexPortal"/>
</dbReference>
<dbReference type="GO" id="GO:0006412">
    <property type="term" value="P:translation"/>
    <property type="evidence" value="ECO:0000266"/>
    <property type="project" value="MGI"/>
</dbReference>
<dbReference type="FunFam" id="3.30.70.330:FF:000284">
    <property type="entry name" value="39S ribosomal protein L23, mitochondrial"/>
    <property type="match status" value="1"/>
</dbReference>
<dbReference type="Gene3D" id="3.30.70.330">
    <property type="match status" value="1"/>
</dbReference>
<dbReference type="InterPro" id="IPR012677">
    <property type="entry name" value="Nucleotide-bd_a/b_plait_sf"/>
</dbReference>
<dbReference type="InterPro" id="IPR013025">
    <property type="entry name" value="Ribosomal_uL23-like"/>
</dbReference>
<dbReference type="InterPro" id="IPR012678">
    <property type="entry name" value="Ribosomal_uL23/eL15/eS24_sf"/>
</dbReference>
<dbReference type="PANTHER" id="PTHR12059:SF5">
    <property type="entry name" value="LARGE RIBOSOMAL SUBUNIT PROTEIN UL23M"/>
    <property type="match status" value="1"/>
</dbReference>
<dbReference type="PANTHER" id="PTHR12059">
    <property type="entry name" value="RIBOSOMAL PROTEIN L23-RELATED"/>
    <property type="match status" value="1"/>
</dbReference>
<dbReference type="Pfam" id="PF00276">
    <property type="entry name" value="Ribosomal_L23"/>
    <property type="match status" value="1"/>
</dbReference>
<dbReference type="SUPFAM" id="SSF54189">
    <property type="entry name" value="Ribosomal proteins S24e, L23 and L15e"/>
    <property type="match status" value="1"/>
</dbReference>
<sequence>MARNVLYPLYQLGGPQLRVFRTNFFIQLVRPGTAQPEDTVQFRIPMEMTRVDLRNYLEQIYNVPVAAVRTRVQHGSNRRRDHKNVRIKKPDYKVAYVQLAHGQTFTFPDLFPEKDPRSPEPLEEELPQQRQSSDLRCPGIPSWFGL</sequence>